<name>YAB7_ORYSJ</name>
<accession>A2PZN8</accession>
<accession>A3BLC7</accession>
<evidence type="ECO:0000250" key="1"/>
<evidence type="ECO:0000256" key="2">
    <source>
        <dbReference type="SAM" id="MobiDB-lite"/>
    </source>
</evidence>
<evidence type="ECO:0000269" key="3">
    <source>
    </source>
</evidence>
<evidence type="ECO:0000305" key="4"/>
<feature type="chain" id="PRO_0000308701" description="Protein YABBY 7">
    <location>
        <begin position="1"/>
        <end position="169"/>
    </location>
</feature>
<feature type="zinc finger region" description="C4-type">
    <location>
        <begin position="21"/>
        <end position="48"/>
    </location>
</feature>
<feature type="region of interest" description="Disordered" evidence="2">
    <location>
        <begin position="63"/>
        <end position="122"/>
    </location>
</feature>
<feature type="splice variant" id="VSP_029049" description="In isoform 2." evidence="4">
    <original>WAHLPRIQ</original>
    <variation>NPAEARQG</variation>
    <location>
        <begin position="154"/>
        <end position="161"/>
    </location>
</feature>
<feature type="splice variant" id="VSP_029050" description="In isoform 2." evidence="4">
    <location>
        <begin position="162"/>
        <end position="169"/>
    </location>
</feature>
<sequence length="169" mass="18036">MSSAARHHCSGLRERLGCVQCSFCATVLLVSVPCSSVLRVVAVQCGHCSGILSAVNLPPSPVSASIELTPQELDAGPPPGEYSDESSGDDREGRDAEDDAPAPAAAAVANKPPGRKQRTPSAYNCFVKEEIKRIKSMEPNITHKQAFSTAAKNWAHLPRIQQKRGRDSC</sequence>
<comment type="subcellular location">
    <subcellularLocation>
        <location evidence="1">Nucleus</location>
    </subcellularLocation>
</comment>
<comment type="alternative products">
    <event type="alternative splicing"/>
    <isoform>
        <id>A2PZN8-1</id>
        <name>1</name>
        <sequence type="displayed"/>
    </isoform>
    <isoform>
        <id>A2PZN8-2</id>
        <name>2</name>
        <sequence type="described" ref="VSP_029049 VSP_029050"/>
    </isoform>
</comment>
<comment type="tissue specificity">
    <text evidence="3">Expressed in leaf sheaths and flowers.</text>
</comment>
<comment type="miscellaneous">
    <molecule>Isoform 2</molecule>
    <text evidence="4">May be due to a competing acceptor splice site.</text>
</comment>
<comment type="similarity">
    <text evidence="4">Belongs to the YABBY family.</text>
</comment>
<proteinExistence type="evidence at transcript level"/>
<protein>
    <recommendedName>
        <fullName>Protein YABBY 7</fullName>
    </recommendedName>
    <alternativeName>
        <fullName>OsYABBY7</fullName>
    </alternativeName>
</protein>
<organism>
    <name type="scientific">Oryza sativa subsp. japonica</name>
    <name type="common">Rice</name>
    <dbReference type="NCBI Taxonomy" id="39947"/>
    <lineage>
        <taxon>Eukaryota</taxon>
        <taxon>Viridiplantae</taxon>
        <taxon>Streptophyta</taxon>
        <taxon>Embryophyta</taxon>
        <taxon>Tracheophyta</taxon>
        <taxon>Spermatophyta</taxon>
        <taxon>Magnoliopsida</taxon>
        <taxon>Liliopsida</taxon>
        <taxon>Poales</taxon>
        <taxon>Poaceae</taxon>
        <taxon>BOP clade</taxon>
        <taxon>Oryzoideae</taxon>
        <taxon>Oryzeae</taxon>
        <taxon>Oryzinae</taxon>
        <taxon>Oryza</taxon>
        <taxon>Oryza sativa</taxon>
    </lineage>
</organism>
<dbReference type="EMBL" id="AB274019">
    <property type="protein sequence ID" value="BAF45808.1"/>
    <property type="molecule type" value="mRNA"/>
</dbReference>
<dbReference type="EMBL" id="AP008213">
    <property type="status" value="NOT_ANNOTATED_CDS"/>
    <property type="molecule type" value="Genomic_DNA"/>
</dbReference>
<dbReference type="EMBL" id="AP014963">
    <property type="status" value="NOT_ANNOTATED_CDS"/>
    <property type="molecule type" value="Genomic_DNA"/>
</dbReference>
<dbReference type="EMBL" id="CM000144">
    <property type="status" value="NOT_ANNOTATED_CDS"/>
    <property type="molecule type" value="Genomic_DNA"/>
</dbReference>
<dbReference type="RefSeq" id="XP_015647119.1">
    <property type="nucleotide sequence ID" value="XM_015791633.1"/>
</dbReference>
<dbReference type="SMR" id="A2PZN8"/>
<dbReference type="STRING" id="39947.A2PZN8"/>
<dbReference type="PaxDb" id="39947-A2PZN8"/>
<dbReference type="HOGENOM" id="CLU_2726748_0_0_1"/>
<dbReference type="InParanoid" id="A2PZN8"/>
<dbReference type="OrthoDB" id="667577at2759"/>
<dbReference type="Proteomes" id="UP000000763">
    <property type="component" value="Chromosome 7"/>
</dbReference>
<dbReference type="Proteomes" id="UP000007752">
    <property type="component" value="Chromosome 7"/>
</dbReference>
<dbReference type="Proteomes" id="UP000059680">
    <property type="component" value="Chromosome 7"/>
</dbReference>
<dbReference type="GO" id="GO:0005634">
    <property type="term" value="C:nucleus"/>
    <property type="evidence" value="ECO:0000318"/>
    <property type="project" value="GO_Central"/>
</dbReference>
<dbReference type="GO" id="GO:0008270">
    <property type="term" value="F:zinc ion binding"/>
    <property type="evidence" value="ECO:0007669"/>
    <property type="project" value="UniProtKB-KW"/>
</dbReference>
<dbReference type="GO" id="GO:0045165">
    <property type="term" value="P:cell fate commitment"/>
    <property type="evidence" value="ECO:0000318"/>
    <property type="project" value="GO_Central"/>
</dbReference>
<dbReference type="GO" id="GO:0048481">
    <property type="term" value="P:plant ovule development"/>
    <property type="evidence" value="ECO:0000318"/>
    <property type="project" value="GO_Central"/>
</dbReference>
<dbReference type="GO" id="GO:0009944">
    <property type="term" value="P:polarity specification of adaxial/abaxial axis"/>
    <property type="evidence" value="ECO:0000318"/>
    <property type="project" value="GO_Central"/>
</dbReference>
<dbReference type="CDD" id="cd00084">
    <property type="entry name" value="HMG-box_SF"/>
    <property type="match status" value="1"/>
</dbReference>
<dbReference type="FunFam" id="1.10.30.10:FF:000076">
    <property type="entry name" value="Axial regulator YABBY 4"/>
    <property type="match status" value="1"/>
</dbReference>
<dbReference type="Gene3D" id="1.10.30.10">
    <property type="entry name" value="High mobility group box domain"/>
    <property type="match status" value="1"/>
</dbReference>
<dbReference type="InterPro" id="IPR036910">
    <property type="entry name" value="HMG_box_dom_sf"/>
</dbReference>
<dbReference type="InterPro" id="IPR006780">
    <property type="entry name" value="YABBY"/>
</dbReference>
<dbReference type="InterPro" id="IPR056775">
    <property type="entry name" value="YABBY_C"/>
</dbReference>
<dbReference type="InterPro" id="IPR056776">
    <property type="entry name" value="YABBY_N"/>
</dbReference>
<dbReference type="PANTHER" id="PTHR31675:SF8">
    <property type="entry name" value="AXIAL REGULATOR YABBY 4"/>
    <property type="match status" value="1"/>
</dbReference>
<dbReference type="PANTHER" id="PTHR31675">
    <property type="entry name" value="PROTEIN YABBY 6-RELATED"/>
    <property type="match status" value="1"/>
</dbReference>
<dbReference type="Pfam" id="PF04690">
    <property type="entry name" value="YABBY"/>
    <property type="match status" value="1"/>
</dbReference>
<dbReference type="Pfam" id="PF24868">
    <property type="entry name" value="YABBY_N"/>
    <property type="match status" value="1"/>
</dbReference>
<dbReference type="SUPFAM" id="SSF47095">
    <property type="entry name" value="HMG-box"/>
    <property type="match status" value="1"/>
</dbReference>
<gene>
    <name type="primary">YAB7</name>
    <name type="ordered locus">Os07g0571800</name>
    <name type="ordered locus">LOC_Os07g38410</name>
    <name type="ORF">OsJ_023849</name>
</gene>
<reference key="1">
    <citation type="journal article" date="2007" name="Mol. Genet. Genomics">
        <title>Molecular characterization the YABBY gene family in Oryza sativa and expression analysis of OsYABBY1.</title>
        <authorList>
            <person name="Toriba T."/>
            <person name="Harada K."/>
            <person name="Takamura A."/>
            <person name="Nakamura H."/>
            <person name="Ichikawa H."/>
            <person name="Suzaki T."/>
            <person name="Hirano H.-Y."/>
        </authorList>
    </citation>
    <scope>NUCLEOTIDE SEQUENCE [MRNA] (ISOFORM 1)</scope>
    <scope>TISSUE SPECIFICITY</scope>
    <scope>ALTERNATIVE SPLICING</scope>
    <scope>GENE FAMILY</scope>
    <scope>NOMENCLATURE</scope>
    <source>
        <strain>cv. Nipponbare</strain>
    </source>
</reference>
<reference key="2">
    <citation type="journal article" date="2005" name="Nature">
        <title>The map-based sequence of the rice genome.</title>
        <authorList>
            <consortium name="International rice genome sequencing project (IRGSP)"/>
        </authorList>
    </citation>
    <scope>NUCLEOTIDE SEQUENCE [LARGE SCALE GENOMIC DNA]</scope>
    <source>
        <strain>cv. Nipponbare</strain>
    </source>
</reference>
<reference key="3">
    <citation type="journal article" date="2008" name="Nucleic Acids Res.">
        <title>The rice annotation project database (RAP-DB): 2008 update.</title>
        <authorList>
            <consortium name="The rice annotation project (RAP)"/>
        </authorList>
    </citation>
    <scope>GENOME REANNOTATION</scope>
    <source>
        <strain>cv. Nipponbare</strain>
    </source>
</reference>
<reference key="4">
    <citation type="journal article" date="2013" name="Rice">
        <title>Improvement of the Oryza sativa Nipponbare reference genome using next generation sequence and optical map data.</title>
        <authorList>
            <person name="Kawahara Y."/>
            <person name="de la Bastide M."/>
            <person name="Hamilton J.P."/>
            <person name="Kanamori H."/>
            <person name="McCombie W.R."/>
            <person name="Ouyang S."/>
            <person name="Schwartz D.C."/>
            <person name="Tanaka T."/>
            <person name="Wu J."/>
            <person name="Zhou S."/>
            <person name="Childs K.L."/>
            <person name="Davidson R.M."/>
            <person name="Lin H."/>
            <person name="Quesada-Ocampo L."/>
            <person name="Vaillancourt B."/>
            <person name="Sakai H."/>
            <person name="Lee S.S."/>
            <person name="Kim J."/>
            <person name="Numa H."/>
            <person name="Itoh T."/>
            <person name="Buell C.R."/>
            <person name="Matsumoto T."/>
        </authorList>
    </citation>
    <scope>GENOME REANNOTATION</scope>
    <source>
        <strain>cv. Nipponbare</strain>
    </source>
</reference>
<reference key="5">
    <citation type="journal article" date="2005" name="PLoS Biol.">
        <title>The genomes of Oryza sativa: a history of duplications.</title>
        <authorList>
            <person name="Yu J."/>
            <person name="Wang J."/>
            <person name="Lin W."/>
            <person name="Li S."/>
            <person name="Li H."/>
            <person name="Zhou J."/>
            <person name="Ni P."/>
            <person name="Dong W."/>
            <person name="Hu S."/>
            <person name="Zeng C."/>
            <person name="Zhang J."/>
            <person name="Zhang Y."/>
            <person name="Li R."/>
            <person name="Xu Z."/>
            <person name="Li S."/>
            <person name="Li X."/>
            <person name="Zheng H."/>
            <person name="Cong L."/>
            <person name="Lin L."/>
            <person name="Yin J."/>
            <person name="Geng J."/>
            <person name="Li G."/>
            <person name="Shi J."/>
            <person name="Liu J."/>
            <person name="Lv H."/>
            <person name="Li J."/>
            <person name="Wang J."/>
            <person name="Deng Y."/>
            <person name="Ran L."/>
            <person name="Shi X."/>
            <person name="Wang X."/>
            <person name="Wu Q."/>
            <person name="Li C."/>
            <person name="Ren X."/>
            <person name="Wang J."/>
            <person name="Wang X."/>
            <person name="Li D."/>
            <person name="Liu D."/>
            <person name="Zhang X."/>
            <person name="Ji Z."/>
            <person name="Zhao W."/>
            <person name="Sun Y."/>
            <person name="Zhang Z."/>
            <person name="Bao J."/>
            <person name="Han Y."/>
            <person name="Dong L."/>
            <person name="Ji J."/>
            <person name="Chen P."/>
            <person name="Wu S."/>
            <person name="Liu J."/>
            <person name="Xiao Y."/>
            <person name="Bu D."/>
            <person name="Tan J."/>
            <person name="Yang L."/>
            <person name="Ye C."/>
            <person name="Zhang J."/>
            <person name="Xu J."/>
            <person name="Zhou Y."/>
            <person name="Yu Y."/>
            <person name="Zhang B."/>
            <person name="Zhuang S."/>
            <person name="Wei H."/>
            <person name="Liu B."/>
            <person name="Lei M."/>
            <person name="Yu H."/>
            <person name="Li Y."/>
            <person name="Xu H."/>
            <person name="Wei S."/>
            <person name="He X."/>
            <person name="Fang L."/>
            <person name="Zhang Z."/>
            <person name="Zhang Y."/>
            <person name="Huang X."/>
            <person name="Su Z."/>
            <person name="Tong W."/>
            <person name="Li J."/>
            <person name="Tong Z."/>
            <person name="Li S."/>
            <person name="Ye J."/>
            <person name="Wang L."/>
            <person name="Fang L."/>
            <person name="Lei T."/>
            <person name="Chen C.-S."/>
            <person name="Chen H.-C."/>
            <person name="Xu Z."/>
            <person name="Li H."/>
            <person name="Huang H."/>
            <person name="Zhang F."/>
            <person name="Xu H."/>
            <person name="Li N."/>
            <person name="Zhao C."/>
            <person name="Li S."/>
            <person name="Dong L."/>
            <person name="Huang Y."/>
            <person name="Li L."/>
            <person name="Xi Y."/>
            <person name="Qi Q."/>
            <person name="Li W."/>
            <person name="Zhang B."/>
            <person name="Hu W."/>
            <person name="Zhang Y."/>
            <person name="Tian X."/>
            <person name="Jiao Y."/>
            <person name="Liang X."/>
            <person name="Jin J."/>
            <person name="Gao L."/>
            <person name="Zheng W."/>
            <person name="Hao B."/>
            <person name="Liu S.-M."/>
            <person name="Wang W."/>
            <person name="Yuan L."/>
            <person name="Cao M."/>
            <person name="McDermott J."/>
            <person name="Samudrala R."/>
            <person name="Wang J."/>
            <person name="Wong G.K.-S."/>
            <person name="Yang H."/>
        </authorList>
    </citation>
    <scope>NUCLEOTIDE SEQUENCE [LARGE SCALE GENOMIC DNA]</scope>
    <source>
        <strain>cv. Nipponbare</strain>
    </source>
</reference>
<keyword id="KW-0025">Alternative splicing</keyword>
<keyword id="KW-0479">Metal-binding</keyword>
<keyword id="KW-0539">Nucleus</keyword>
<keyword id="KW-1185">Reference proteome</keyword>
<keyword id="KW-0862">Zinc</keyword>
<keyword id="KW-0863">Zinc-finger</keyword>